<protein>
    <recommendedName>
        <fullName evidence="13">Thiohydroximate-O-sulfate sulfur/sulfate-lyase (nitrile-forming) NSP2</fullName>
        <ecNumber evidence="5 6 7">4.8.1.5</ecNumber>
    </recommendedName>
    <alternativeName>
        <fullName evidence="10">Jacalin-related lectin 21</fullName>
    </alternativeName>
    <alternativeName>
        <fullName evidence="11 12">Nitrile-specifier protein 2</fullName>
        <shortName evidence="11 12">AtNSP2</shortName>
    </alternativeName>
</protein>
<feature type="chain" id="PRO_0000363143" description="Thiohydroximate-O-sulfate sulfur/sulfate-lyase (nitrile-forming) NSP2">
    <location>
        <begin position="1"/>
        <end position="471"/>
    </location>
</feature>
<feature type="domain" description="Jacalin-type lectin" evidence="4">
    <location>
        <begin position="2"/>
        <end position="144"/>
    </location>
</feature>
<feature type="repeat" description="Kelch 1" evidence="3">
    <location>
        <begin position="178"/>
        <end position="226"/>
    </location>
</feature>
<feature type="repeat" description="Kelch 2" evidence="3">
    <location>
        <begin position="231"/>
        <end position="277"/>
    </location>
</feature>
<feature type="repeat" description="Kelch 3" evidence="3">
    <location>
        <begin position="281"/>
        <end position="330"/>
    </location>
</feature>
<feature type="repeat" description="Kelch 4" evidence="3">
    <location>
        <begin position="332"/>
        <end position="379"/>
    </location>
</feature>
<feature type="repeat" description="Kelch 5" evidence="3">
    <location>
        <begin position="381"/>
        <end position="435"/>
    </location>
</feature>
<feature type="repeat" description="Kelch 6" evidence="3">
    <location>
        <begin position="446"/>
        <end position="471"/>
    </location>
</feature>
<feature type="active site" description="Proton donor" evidence="2">
    <location>
        <position position="238"/>
    </location>
</feature>
<feature type="active site" description="Proton donor" evidence="2">
    <location>
        <position position="293"/>
    </location>
</feature>
<feature type="binding site" evidence="2">
    <location>
        <position position="238"/>
    </location>
    <ligand>
        <name>a (Z)-N-(sulfonatooxy)alkanimidothioate</name>
        <dbReference type="ChEBI" id="CHEBI:183089"/>
    </ligand>
    <ligandPart>
        <name>sulfur</name>
        <dbReference type="ChEBI" id="CHEBI:26833"/>
    </ligandPart>
</feature>
<feature type="binding site" evidence="2">
    <location>
        <position position="271"/>
    </location>
    <ligand>
        <name>a (Z)-N-(sulfonatooxy)alkanimidothioate</name>
        <dbReference type="ChEBI" id="CHEBI:183089"/>
    </ligand>
</feature>
<feature type="binding site" evidence="2">
    <location>
        <position position="293"/>
    </location>
    <ligand>
        <name>a (Z)-N-(sulfonatooxy)alkanimidothioate</name>
        <dbReference type="ChEBI" id="CHEBI:183089"/>
    </ligand>
    <ligandPart>
        <name>sulfur</name>
        <dbReference type="ChEBI" id="CHEBI:26833"/>
    </ligandPart>
</feature>
<feature type="binding site" evidence="2">
    <location>
        <position position="322"/>
    </location>
    <ligand>
        <name>a (Z)-N-(sulfonatooxy)alkanimidothioate</name>
        <dbReference type="ChEBI" id="CHEBI:183089"/>
    </ligand>
</feature>
<feature type="binding site" evidence="2">
    <location>
        <position position="371"/>
    </location>
    <ligand>
        <name>a (Z)-N-(sulfonatooxy)alkanimidothioate</name>
        <dbReference type="ChEBI" id="CHEBI:183089"/>
    </ligand>
</feature>
<feature type="binding site" evidence="2">
    <location>
        <position position="387"/>
    </location>
    <ligand>
        <name>Fe(2+)</name>
        <dbReference type="ChEBI" id="CHEBI:29033"/>
    </ligand>
</feature>
<feature type="binding site" evidence="2">
    <location>
        <position position="391"/>
    </location>
    <ligand>
        <name>Fe(2+)</name>
        <dbReference type="ChEBI" id="CHEBI:29033"/>
    </ligand>
</feature>
<feature type="binding site" evidence="2">
    <location>
        <position position="395"/>
    </location>
    <ligand>
        <name>Fe(2+)</name>
        <dbReference type="ChEBI" id="CHEBI:29033"/>
    </ligand>
</feature>
<feature type="binding site" evidence="2">
    <location>
        <position position="433"/>
    </location>
    <ligand>
        <name>a (Z)-N-(sulfonatooxy)alkanimidothioate</name>
        <dbReference type="ChEBI" id="CHEBI:183089"/>
    </ligand>
</feature>
<feature type="splice variant" id="VSP_056709" description="In isoform 2." evidence="13">
    <original>K</original>
    <variation>KVV</variation>
    <location>
        <position position="156"/>
    </location>
</feature>
<evidence type="ECO:0000250" key="1">
    <source>
        <dbReference type="UniProtKB" id="G1FNI6"/>
    </source>
</evidence>
<evidence type="ECO:0000250" key="2">
    <source>
        <dbReference type="UniProtKB" id="Q9SDM9"/>
    </source>
</evidence>
<evidence type="ECO:0000255" key="3"/>
<evidence type="ECO:0000255" key="4">
    <source>
        <dbReference type="PROSITE-ProRule" id="PRU01088"/>
    </source>
</evidence>
<evidence type="ECO:0000269" key="5">
    <source>
    </source>
</evidence>
<evidence type="ECO:0000269" key="6">
    <source>
    </source>
</evidence>
<evidence type="ECO:0000269" key="7">
    <source>
    </source>
</evidence>
<evidence type="ECO:0000269" key="8">
    <source>
    </source>
</evidence>
<evidence type="ECO:0000269" key="9">
    <source>
    </source>
</evidence>
<evidence type="ECO:0000303" key="10">
    <source>
    </source>
</evidence>
<evidence type="ECO:0000303" key="11">
    <source>
    </source>
</evidence>
<evidence type="ECO:0000303" key="12">
    <source>
    </source>
</evidence>
<evidence type="ECO:0000305" key="13"/>
<evidence type="ECO:0000312" key="14">
    <source>
        <dbReference type="Araport" id="AT2G33070"/>
    </source>
</evidence>
<evidence type="ECO:0000312" key="15">
    <source>
        <dbReference type="EMBL" id="AAC04913.1"/>
    </source>
</evidence>
<reference key="1">
    <citation type="journal article" date="1999" name="Nature">
        <title>Sequence and analysis of chromosome 2 of the plant Arabidopsis thaliana.</title>
        <authorList>
            <person name="Lin X."/>
            <person name="Kaul S."/>
            <person name="Rounsley S.D."/>
            <person name="Shea T.P."/>
            <person name="Benito M.-I."/>
            <person name="Town C.D."/>
            <person name="Fujii C.Y."/>
            <person name="Mason T.M."/>
            <person name="Bowman C.L."/>
            <person name="Barnstead M.E."/>
            <person name="Feldblyum T.V."/>
            <person name="Buell C.R."/>
            <person name="Ketchum K.A."/>
            <person name="Lee J.J."/>
            <person name="Ronning C.M."/>
            <person name="Koo H.L."/>
            <person name="Moffat K.S."/>
            <person name="Cronin L.A."/>
            <person name="Shen M."/>
            <person name="Pai G."/>
            <person name="Van Aken S."/>
            <person name="Umayam L."/>
            <person name="Tallon L.J."/>
            <person name="Gill J.E."/>
            <person name="Adams M.D."/>
            <person name="Carrera A.J."/>
            <person name="Creasy T.H."/>
            <person name="Goodman H.M."/>
            <person name="Somerville C.R."/>
            <person name="Copenhaver G.P."/>
            <person name="Preuss D."/>
            <person name="Nierman W.C."/>
            <person name="White O."/>
            <person name="Eisen J.A."/>
            <person name="Salzberg S.L."/>
            <person name="Fraser C.M."/>
            <person name="Venter J.C."/>
        </authorList>
    </citation>
    <scope>NUCLEOTIDE SEQUENCE [LARGE SCALE GENOMIC DNA]</scope>
    <source>
        <strain>cv. Columbia</strain>
    </source>
</reference>
<reference key="2">
    <citation type="journal article" date="2017" name="Plant J.">
        <title>Araport11: a complete reannotation of the Arabidopsis thaliana reference genome.</title>
        <authorList>
            <person name="Cheng C.Y."/>
            <person name="Krishnakumar V."/>
            <person name="Chan A.P."/>
            <person name="Thibaud-Nissen F."/>
            <person name="Schobel S."/>
            <person name="Town C.D."/>
        </authorList>
    </citation>
    <scope>GENOME REANNOTATION</scope>
    <source>
        <strain>cv. Columbia</strain>
    </source>
</reference>
<reference key="3">
    <citation type="journal article" date="2003" name="Science">
        <title>Empirical analysis of transcriptional activity in the Arabidopsis genome.</title>
        <authorList>
            <person name="Yamada K."/>
            <person name="Lim J."/>
            <person name="Dale J.M."/>
            <person name="Chen H."/>
            <person name="Shinn P."/>
            <person name="Palm C.J."/>
            <person name="Southwick A.M."/>
            <person name="Wu H.C."/>
            <person name="Kim C.J."/>
            <person name="Nguyen M."/>
            <person name="Pham P.K."/>
            <person name="Cheuk R.F."/>
            <person name="Karlin-Newmann G."/>
            <person name="Liu S.X."/>
            <person name="Lam B."/>
            <person name="Sakano H."/>
            <person name="Wu T."/>
            <person name="Yu G."/>
            <person name="Miranda M."/>
            <person name="Quach H.L."/>
            <person name="Tripp M."/>
            <person name="Chang C.H."/>
            <person name="Lee J.M."/>
            <person name="Toriumi M.J."/>
            <person name="Chan M.M."/>
            <person name="Tang C.C."/>
            <person name="Onodera C.S."/>
            <person name="Deng J.M."/>
            <person name="Akiyama K."/>
            <person name="Ansari Y."/>
            <person name="Arakawa T."/>
            <person name="Banh J."/>
            <person name="Banno F."/>
            <person name="Bowser L."/>
            <person name="Brooks S.Y."/>
            <person name="Carninci P."/>
            <person name="Chao Q."/>
            <person name="Choy N."/>
            <person name="Enju A."/>
            <person name="Goldsmith A.D."/>
            <person name="Gurjal M."/>
            <person name="Hansen N.F."/>
            <person name="Hayashizaki Y."/>
            <person name="Johnson-Hopson C."/>
            <person name="Hsuan V.W."/>
            <person name="Iida K."/>
            <person name="Karnes M."/>
            <person name="Khan S."/>
            <person name="Koesema E."/>
            <person name="Ishida J."/>
            <person name="Jiang P.X."/>
            <person name="Jones T."/>
            <person name="Kawai J."/>
            <person name="Kamiya A."/>
            <person name="Meyers C."/>
            <person name="Nakajima M."/>
            <person name="Narusaka M."/>
            <person name="Seki M."/>
            <person name="Sakurai T."/>
            <person name="Satou M."/>
            <person name="Tamse R."/>
            <person name="Vaysberg M."/>
            <person name="Wallender E.K."/>
            <person name="Wong C."/>
            <person name="Yamamura Y."/>
            <person name="Yuan S."/>
            <person name="Shinozaki K."/>
            <person name="Davis R.W."/>
            <person name="Theologis A."/>
            <person name="Ecker J.R."/>
        </authorList>
    </citation>
    <scope>NUCLEOTIDE SEQUENCE [LARGE SCALE MRNA]</scope>
    <source>
        <strain>cv. Columbia</strain>
    </source>
</reference>
<reference key="4">
    <citation type="journal article" date="2008" name="Plant Cell Physiol.">
        <title>Antagonistic jacalin-related lectins regulate the size of ER body-type beta-glucosidase complexes in Arabidopsis thaliana.</title>
        <authorList>
            <person name="Nagano A.J."/>
            <person name="Fukao Y."/>
            <person name="Fujiwara M."/>
            <person name="Nishimura M."/>
            <person name="Hara-Nishimura I."/>
        </authorList>
    </citation>
    <scope>GENE FAMILY</scope>
    <scope>NOMENCLATURE</scope>
</reference>
<reference key="5">
    <citation type="journal article" date="2009" name="J. Biol. Chem.">
        <title>Nitrile-specifier proteins involved in glucosinolate hydrolysis in Arabidopsis thaliana.</title>
        <authorList>
            <person name="Kissen R."/>
            <person name="Bones A.M."/>
        </authorList>
    </citation>
    <scope>FUNCTION</scope>
    <scope>CATALYTIC ACTIVITY</scope>
    <scope>ACTIVITY REGULATION</scope>
    <scope>COFACTOR</scope>
    <scope>GENE FAMILY</scope>
    <source>
        <strain>cv. C24</strain>
        <strain>cv. Columbia</strain>
        <strain>cv. Ru-0</strain>
    </source>
</reference>
<reference key="6">
    <citation type="journal article" date="2009" name="Plant Physiol.">
        <title>The genetic basis of constitutive and herbivore-induced ESP-independent nitrile formation in Arabidopsis.</title>
        <authorList>
            <person name="Burow M."/>
            <person name="Losansky A."/>
            <person name="Muller R."/>
            <person name="Plock A."/>
            <person name="Kliebenstein D.J."/>
            <person name="Wittstock U."/>
        </authorList>
    </citation>
    <scope>FUNCTION</scope>
    <scope>DISRUPTION PHENOTYPE</scope>
    <scope>CATALYTIC ACTIVITY</scope>
</reference>
<reference key="7">
    <citation type="journal article" date="2012" name="Phytochemistry">
        <title>Characterization of recombinant nitrile-specifier proteins (NSPs) of Arabidopsis thaliana: dependency on Fe(II) ions and the effect of glucosinolate substrate and reaction conditions.</title>
        <authorList>
            <person name="Kong X.Y."/>
            <person name="Kissen R."/>
            <person name="Bones A.M."/>
        </authorList>
    </citation>
    <scope>FUNCTION</scope>
    <scope>CATALYTIC ACTIVITY</scope>
    <scope>ACTIVITY REGULATION</scope>
    <scope>COFACTOR</scope>
</reference>
<reference key="8">
    <citation type="journal article" date="2016" name="Front. Plant Sci.">
        <title>NSP-dependent simple nitrile formation dominates upon breakdown of major aliphatic glucosinolates in roots, seeds, and seedlings of Arabidopsis thaliana Columbia-0.</title>
        <authorList>
            <person name="Wittstock U."/>
            <person name="Meier K."/>
            <person name="Doerr F."/>
            <person name="Ravindran B.M."/>
        </authorList>
    </citation>
    <scope>FUNCTION</scope>
    <scope>DISRUPTION PHENOTYPE</scope>
    <scope>TISSUE SPECIFICITY</scope>
    <source>
        <strain>cv. Columbia</strain>
    </source>
</reference>
<reference key="9">
    <citation type="journal article" date="2019" name="Front. Plant Sci.">
        <title>Glucosinolate content in dormant and germinating Arabidopsis thaliana seeds is affected by non-functional alleles of classical myrosinase and nitrile-specifier protein genes.</title>
        <authorList>
            <person name="Meier K."/>
            <person name="Ehbrecht M.D."/>
            <person name="Wittstock U."/>
        </authorList>
    </citation>
    <scope>FUNCTION</scope>
    <scope>DISRUPTION PHENOTYPE</scope>
    <source>
        <strain>cv. Columbia</strain>
    </source>
</reference>
<name>JAL21_ARATH</name>
<proteinExistence type="evidence at protein level"/>
<organism>
    <name type="scientific">Arabidopsis thaliana</name>
    <name type="common">Mouse-ear cress</name>
    <dbReference type="NCBI Taxonomy" id="3702"/>
    <lineage>
        <taxon>Eukaryota</taxon>
        <taxon>Viridiplantae</taxon>
        <taxon>Streptophyta</taxon>
        <taxon>Embryophyta</taxon>
        <taxon>Tracheophyta</taxon>
        <taxon>Spermatophyta</taxon>
        <taxon>Magnoliopsida</taxon>
        <taxon>eudicotyledons</taxon>
        <taxon>Gunneridae</taxon>
        <taxon>Pentapetalae</taxon>
        <taxon>rosids</taxon>
        <taxon>malvids</taxon>
        <taxon>Brassicales</taxon>
        <taxon>Brassicaceae</taxon>
        <taxon>Camelineae</taxon>
        <taxon>Arabidopsis</taxon>
    </lineage>
</organism>
<gene>
    <name evidence="11 12" type="primary">NSP2</name>
    <name evidence="10" type="synonym">JAL21</name>
    <name evidence="14" type="ordered locus">At2g33070</name>
    <name evidence="15" type="ORF">F25I18.19</name>
</gene>
<keyword id="KW-0025">Alternative splicing</keyword>
<keyword id="KW-0408">Iron</keyword>
<keyword id="KW-0880">Kelch repeat</keyword>
<keyword id="KW-0430">Lectin</keyword>
<keyword id="KW-0456">Lyase</keyword>
<keyword id="KW-0479">Metal-binding</keyword>
<keyword id="KW-1185">Reference proteome</keyword>
<keyword id="KW-0677">Repeat</keyword>
<sequence length="471" mass="51215">MVQKVEARGGEIGDVWDDGAYDGVRKVYVGQGEDGIAFVKFEYVNGSQEVVGDERGKKTLLGAEEFEVDPDDYIVYVEGYHEKVFGVTTKEIISTLTFKTYKGKTSPPFGIVSGTKFVLQGGKIVGFHGRSTDVLHSLGAYISSPATPKLRGKWIKVEQKGEGPGPRCSHDIAQVGNKIFSFGGELTPNQPIDKHLYVFDLETRTWSISPATGDVPNLSCLGVRMVSIGSSLYVFGGRDASRKYNGFYSFDTTKNEWKLLTPVEQGPTPRSFHSMTADENNVYVFGGVSATVRLKTLDAYNIVDHKWVQCSTPGGSCSVRGGAGLEVVQGKVWVVYGFNGCEVDDVHCYDPAQDKWTQVETFGEKPCARSVFASAVVGKHILVFGGEIAMDPKAHEGPGQLSGGTFALDTETLKWEKLDKLGEEEETPSIRGWSASTTGTIDGKKGLVMFGGKAQTNDRFGDLFFYGVDSA</sequence>
<dbReference type="EC" id="4.8.1.5" evidence="5 6 7"/>
<dbReference type="EMBL" id="AC002334">
    <property type="protein sequence ID" value="AAC04913.1"/>
    <property type="molecule type" value="Genomic_DNA"/>
</dbReference>
<dbReference type="EMBL" id="CP002685">
    <property type="protein sequence ID" value="AEC08780.1"/>
    <property type="molecule type" value="Genomic_DNA"/>
</dbReference>
<dbReference type="EMBL" id="CP002685">
    <property type="protein sequence ID" value="AEC08781.1"/>
    <property type="molecule type" value="Genomic_DNA"/>
</dbReference>
<dbReference type="EMBL" id="CP002685">
    <property type="protein sequence ID" value="AEC08782.1"/>
    <property type="molecule type" value="Genomic_DNA"/>
</dbReference>
<dbReference type="EMBL" id="AY070077">
    <property type="protein sequence ID" value="AAL49772.1"/>
    <property type="molecule type" value="mRNA"/>
</dbReference>
<dbReference type="EMBL" id="AY091331">
    <property type="protein sequence ID" value="AAM14270.1"/>
    <property type="molecule type" value="mRNA"/>
</dbReference>
<dbReference type="PIR" id="A84741">
    <property type="entry name" value="A84741"/>
</dbReference>
<dbReference type="RefSeq" id="NP_001031468.1">
    <molecule id="O49326-1"/>
    <property type="nucleotide sequence ID" value="NM_001036391.1"/>
</dbReference>
<dbReference type="RefSeq" id="NP_001189663.1">
    <molecule id="O49326-2"/>
    <property type="nucleotide sequence ID" value="NM_001202734.1"/>
</dbReference>
<dbReference type="RefSeq" id="NP_180866.1">
    <molecule id="O49326-1"/>
    <property type="nucleotide sequence ID" value="NM_128867.3"/>
</dbReference>
<dbReference type="SMR" id="O49326"/>
<dbReference type="FunCoup" id="O49326">
    <property type="interactions" value="155"/>
</dbReference>
<dbReference type="STRING" id="3702.O49326"/>
<dbReference type="GlyGen" id="O49326">
    <property type="glycosylation" value="1 site"/>
</dbReference>
<dbReference type="iPTMnet" id="O49326"/>
<dbReference type="PaxDb" id="3702-AT2G33070.3"/>
<dbReference type="ProteomicsDB" id="250656">
    <molecule id="O49326-1"/>
</dbReference>
<dbReference type="EnsemblPlants" id="AT2G33070.1">
    <molecule id="O49326-1"/>
    <property type="protein sequence ID" value="AT2G33070.1"/>
    <property type="gene ID" value="AT2G33070"/>
</dbReference>
<dbReference type="EnsemblPlants" id="AT2G33070.2">
    <molecule id="O49326-1"/>
    <property type="protein sequence ID" value="AT2G33070.2"/>
    <property type="gene ID" value="AT2G33070"/>
</dbReference>
<dbReference type="EnsemblPlants" id="AT2G33070.3">
    <molecule id="O49326-2"/>
    <property type="protein sequence ID" value="AT2G33070.3"/>
    <property type="gene ID" value="AT2G33070"/>
</dbReference>
<dbReference type="GeneID" id="817869"/>
<dbReference type="Gramene" id="AT2G33070.1">
    <molecule id="O49326-1"/>
    <property type="protein sequence ID" value="AT2G33070.1"/>
    <property type="gene ID" value="AT2G33070"/>
</dbReference>
<dbReference type="Gramene" id="AT2G33070.2">
    <molecule id="O49326-1"/>
    <property type="protein sequence ID" value="AT2G33070.2"/>
    <property type="gene ID" value="AT2G33070"/>
</dbReference>
<dbReference type="Gramene" id="AT2G33070.3">
    <molecule id="O49326-2"/>
    <property type="protein sequence ID" value="AT2G33070.3"/>
    <property type="gene ID" value="AT2G33070"/>
</dbReference>
<dbReference type="KEGG" id="ath:AT2G33070"/>
<dbReference type="Araport" id="AT2G33070"/>
<dbReference type="TAIR" id="AT2G33070">
    <property type="gene designation" value="NSP2"/>
</dbReference>
<dbReference type="eggNOG" id="KOG0379">
    <property type="taxonomic scope" value="Eukaryota"/>
</dbReference>
<dbReference type="InParanoid" id="O49326"/>
<dbReference type="OMA" id="FCGRELD"/>
<dbReference type="OrthoDB" id="10250130at2759"/>
<dbReference type="PhylomeDB" id="O49326"/>
<dbReference type="PRO" id="PR:O49326"/>
<dbReference type="Proteomes" id="UP000006548">
    <property type="component" value="Chromosome 2"/>
</dbReference>
<dbReference type="ExpressionAtlas" id="O49326">
    <property type="expression patterns" value="baseline and differential"/>
</dbReference>
<dbReference type="GO" id="GO:0005783">
    <property type="term" value="C:endoplasmic reticulum"/>
    <property type="evidence" value="ECO:0007005"/>
    <property type="project" value="TAIR"/>
</dbReference>
<dbReference type="GO" id="GO:0030246">
    <property type="term" value="F:carbohydrate binding"/>
    <property type="evidence" value="ECO:0007669"/>
    <property type="project" value="UniProtKB-KW"/>
</dbReference>
<dbReference type="GO" id="GO:0016829">
    <property type="term" value="F:lyase activity"/>
    <property type="evidence" value="ECO:0007669"/>
    <property type="project" value="UniProtKB-KW"/>
</dbReference>
<dbReference type="GO" id="GO:0046872">
    <property type="term" value="F:metal ion binding"/>
    <property type="evidence" value="ECO:0007669"/>
    <property type="project" value="UniProtKB-KW"/>
</dbReference>
<dbReference type="GO" id="GO:0009793">
    <property type="term" value="P:embryo development ending in seed dormancy"/>
    <property type="evidence" value="ECO:0000270"/>
    <property type="project" value="UniProtKB"/>
</dbReference>
<dbReference type="GO" id="GO:0019762">
    <property type="term" value="P:glucosinolate catabolic process"/>
    <property type="evidence" value="ECO:0000314"/>
    <property type="project" value="TAIR"/>
</dbReference>
<dbReference type="GO" id="GO:0080028">
    <property type="term" value="P:nitrile biosynthetic process"/>
    <property type="evidence" value="ECO:0000314"/>
    <property type="project" value="TAIR"/>
</dbReference>
<dbReference type="GO" id="GO:0010162">
    <property type="term" value="P:seed dormancy process"/>
    <property type="evidence" value="ECO:0000315"/>
    <property type="project" value="UniProtKB"/>
</dbReference>
<dbReference type="GO" id="GO:0009845">
    <property type="term" value="P:seed germination"/>
    <property type="evidence" value="ECO:0000315"/>
    <property type="project" value="UniProtKB"/>
</dbReference>
<dbReference type="CDD" id="cd09612">
    <property type="entry name" value="Jacalin"/>
    <property type="match status" value="1"/>
</dbReference>
<dbReference type="FunFam" id="2.100.10.30:FF:000001">
    <property type="entry name" value="Jacalin-related lectin 33"/>
    <property type="match status" value="1"/>
</dbReference>
<dbReference type="FunFam" id="2.120.10.80:FF:000175">
    <property type="entry name" value="Nitrile-specifier protein 2"/>
    <property type="match status" value="1"/>
</dbReference>
<dbReference type="Gene3D" id="2.100.10.30">
    <property type="entry name" value="Jacalin-like lectin domain"/>
    <property type="match status" value="1"/>
</dbReference>
<dbReference type="Gene3D" id="2.120.10.80">
    <property type="entry name" value="Kelch-type beta propeller"/>
    <property type="match status" value="1"/>
</dbReference>
<dbReference type="InterPro" id="IPR001229">
    <property type="entry name" value="Jacalin-like_lectin_dom"/>
</dbReference>
<dbReference type="InterPro" id="IPR033734">
    <property type="entry name" value="Jacalin-like_lectin_dom_plant"/>
</dbReference>
<dbReference type="InterPro" id="IPR036404">
    <property type="entry name" value="Jacalin-like_lectin_dom_sf"/>
</dbReference>
<dbReference type="InterPro" id="IPR015915">
    <property type="entry name" value="Kelch-typ_b-propeller"/>
</dbReference>
<dbReference type="InterPro" id="IPR006652">
    <property type="entry name" value="Kelch_1"/>
</dbReference>
<dbReference type="InterPro" id="IPR035429">
    <property type="entry name" value="NSP1/2/3"/>
</dbReference>
<dbReference type="PANTHER" id="PTHR47435">
    <property type="entry name" value="KELCH REPEAT PROTEIN (AFU_ORTHOLOGUE AFUA_5G12780)"/>
    <property type="match status" value="1"/>
</dbReference>
<dbReference type="PANTHER" id="PTHR47435:SF5">
    <property type="entry name" value="NITRILE-SPECIFIER PROTEIN 1-RELATED"/>
    <property type="match status" value="1"/>
</dbReference>
<dbReference type="Pfam" id="PF01419">
    <property type="entry name" value="Jacalin"/>
    <property type="match status" value="1"/>
</dbReference>
<dbReference type="Pfam" id="PF24681">
    <property type="entry name" value="Kelch_KLHDC2_KLHL20_DRC7"/>
    <property type="match status" value="1"/>
</dbReference>
<dbReference type="PIRSF" id="PIRSF038118">
    <property type="entry name" value="Myrosinase-db_jacalin"/>
    <property type="match status" value="1"/>
</dbReference>
<dbReference type="SMART" id="SM00915">
    <property type="entry name" value="Jacalin"/>
    <property type="match status" value="1"/>
</dbReference>
<dbReference type="SMART" id="SM00612">
    <property type="entry name" value="Kelch"/>
    <property type="match status" value="3"/>
</dbReference>
<dbReference type="SUPFAM" id="SSF117281">
    <property type="entry name" value="Kelch motif"/>
    <property type="match status" value="1"/>
</dbReference>
<dbReference type="SUPFAM" id="SSF51101">
    <property type="entry name" value="Mannose-binding lectins"/>
    <property type="match status" value="1"/>
</dbReference>
<dbReference type="PROSITE" id="PS51752">
    <property type="entry name" value="JACALIN_LECTIN"/>
    <property type="match status" value="1"/>
</dbReference>
<comment type="function">
    <text evidence="5 6 7 8 9">Specifier protein responsible for constitutive and herbivore-induced simple nitrile formation, especially in seeds (PubMed:27990154). Promotes simple nitriles, but not epithionitrile or thiocyanate formation (PubMed:18987211, PubMed:19224919). Converts allylglucosinolate (allyl-GSL), 2-propenylglucosinolate (sinigrin), indol-3-ylmethylglucosinolate (glucobrassicin), benzylisothiocyanate and benzylglucosinolate (glucotropaeolin) to their corresponding simple nitriles in the presence of myrosinase (PubMed:18987211, PubMed:19224919, PubMed:22954730). Catalyzes mainly the conversion of benzylisothiocyanate when benzylglucosinolate is used as the initial substrate of myrosinase (PubMed:19224919, PubMed:22954730). Involved in the regulation of glucosinolate content in seeds, during stratification and germination (PubMed:31850033).</text>
</comment>
<comment type="catalytic activity">
    <reaction evidence="5 6 7">
        <text>a (Z)-N-(sulfonatooxy)alkanimidothioate = a nitrile + sulfur + sulfate</text>
        <dbReference type="Rhea" id="RHEA:59956"/>
        <dbReference type="ChEBI" id="CHEBI:16189"/>
        <dbReference type="ChEBI" id="CHEBI:18379"/>
        <dbReference type="ChEBI" id="CHEBI:26833"/>
        <dbReference type="ChEBI" id="CHEBI:183089"/>
        <dbReference type="EC" id="4.8.1.5"/>
    </reaction>
</comment>
<comment type="catalytic activity">
    <reaction evidence="6">
        <text>(Z)-phenyl-N-(sulfonatooxy)methanimidothioate = phenylacetonitrile + sulfur + sulfate</text>
        <dbReference type="Rhea" id="RHEA:69308"/>
        <dbReference type="ChEBI" id="CHEBI:16189"/>
        <dbReference type="ChEBI" id="CHEBI:25979"/>
        <dbReference type="ChEBI" id="CHEBI:26833"/>
        <dbReference type="ChEBI" id="CHEBI:183061"/>
    </reaction>
</comment>
<comment type="catalytic activity">
    <reaction evidence="6">
        <text>(Z)-N-(sulfonatooxy)prop-2-enimidothioate = but-3-enenitrile + sulfur + sulfate</text>
        <dbReference type="Rhea" id="RHEA:69276"/>
        <dbReference type="ChEBI" id="CHEBI:16189"/>
        <dbReference type="ChEBI" id="CHEBI:26833"/>
        <dbReference type="ChEBI" id="CHEBI:183062"/>
        <dbReference type="ChEBI" id="CHEBI:183063"/>
    </reaction>
</comment>
<comment type="catalytic activity">
    <reaction evidence="6 7">
        <text>(Z)-(indol-3-yl)-N-(sulfonatooxy)methanimidothioate = (indol-3-yl)acetonitrile + sulfur + sulfate</text>
        <dbReference type="Rhea" id="RHEA:76227"/>
        <dbReference type="ChEBI" id="CHEBI:16189"/>
        <dbReference type="ChEBI" id="CHEBI:17566"/>
        <dbReference type="ChEBI" id="CHEBI:26833"/>
        <dbReference type="ChEBI" id="CHEBI:195189"/>
    </reaction>
</comment>
<comment type="cofactor">
    <cofactor evidence="6 7">
        <name>Fe(2+)</name>
        <dbReference type="ChEBI" id="CHEBI:29033"/>
    </cofactor>
</comment>
<comment type="activity regulation">
    <text evidence="6 7">The presence of Fe(2+) supports lyase activity in a dose-dependent manner with both benzylglucosinolate and 2-propenylglucosinolate as substrates (PubMed:19224919, PubMed:22954730). More active at pH 7.4 than at pH 6 (PubMed:22954730).</text>
</comment>
<comment type="alternative products">
    <event type="alternative splicing"/>
    <isoform>
        <id>O49326-1</id>
        <name>1</name>
        <sequence type="displayed"/>
    </isoform>
    <isoform>
        <id>O49326-2</id>
        <name>2</name>
        <sequence type="described" ref="VSP_056709"/>
    </isoform>
</comment>
<comment type="tissue specificity">
    <text evidence="8 9">Expressed only in seeds.</text>
</comment>
<comment type="developmental stage">
    <text evidence="9">In seeds, present at low levels during the first stages of embryogenesis but accumulates prossively after the torpedo stage to reach its maximum in mature seeds and during stratification (PubMed:31850033). Fades out upon seed germination and becomes barely detectable in young seedlings (PubMed:31850033).</text>
</comment>
<comment type="disruption phenotype">
    <text evidence="5 8 9">No visible phenotype (PubMed:18987211). Reduced simple nitrile levels in favor of isothiocyanates in tissues corresponding to its main basal expression (PubMed:27990154). Abnormal accumulation of glucosinolate in seeds, during stratification and germination (PubMed:31850033).</text>
</comment>
<comment type="miscellaneous">
    <text evidence="1">The proton donor differs depending on substrates.</text>
</comment>
<comment type="similarity">
    <text evidence="4 13">Belongs to the jacalin lectin family.</text>
</comment>
<accession>O49326</accession>
<accession>F4IUU4</accession>